<evidence type="ECO:0000255" key="1">
    <source>
        <dbReference type="HAMAP-Rule" id="MF_02017"/>
    </source>
</evidence>
<evidence type="ECO:0000256" key="2">
    <source>
        <dbReference type="SAM" id="MobiDB-lite"/>
    </source>
</evidence>
<accession>B5XNL4</accession>
<keyword id="KW-0997">Cell inner membrane</keyword>
<keyword id="KW-1003">Cell membrane</keyword>
<keyword id="KW-0133">Cell shape</keyword>
<keyword id="KW-0238">DNA-binding</keyword>
<keyword id="KW-0472">Membrane</keyword>
<keyword id="KW-0735">Signal-anchor</keyword>
<keyword id="KW-0812">Transmembrane</keyword>
<keyword id="KW-1133">Transmembrane helix</keyword>
<dbReference type="EMBL" id="CP000964">
    <property type="protein sequence ID" value="ACI06889.1"/>
    <property type="molecule type" value="Genomic_DNA"/>
</dbReference>
<dbReference type="SMR" id="B5XNL4"/>
<dbReference type="KEGG" id="kpe:KPK_1274"/>
<dbReference type="HOGENOM" id="CLU_047530_3_1_6"/>
<dbReference type="Proteomes" id="UP000001734">
    <property type="component" value="Chromosome"/>
</dbReference>
<dbReference type="GO" id="GO:0005886">
    <property type="term" value="C:plasma membrane"/>
    <property type="evidence" value="ECO:0007669"/>
    <property type="project" value="UniProtKB-SubCell"/>
</dbReference>
<dbReference type="GO" id="GO:0003677">
    <property type="term" value="F:DNA binding"/>
    <property type="evidence" value="ECO:0007669"/>
    <property type="project" value="UniProtKB-KW"/>
</dbReference>
<dbReference type="GO" id="GO:0008360">
    <property type="term" value="P:regulation of cell shape"/>
    <property type="evidence" value="ECO:0007669"/>
    <property type="project" value="UniProtKB-UniRule"/>
</dbReference>
<dbReference type="CDD" id="cd00093">
    <property type="entry name" value="HTH_XRE"/>
    <property type="match status" value="1"/>
</dbReference>
<dbReference type="Gene3D" id="1.10.260.40">
    <property type="entry name" value="lambda repressor-like DNA-binding domains"/>
    <property type="match status" value="1"/>
</dbReference>
<dbReference type="HAMAP" id="MF_02017">
    <property type="entry name" value="RodZ"/>
    <property type="match status" value="1"/>
</dbReference>
<dbReference type="InterPro" id="IPR050400">
    <property type="entry name" value="Bact_Cytoskel_RodZ"/>
</dbReference>
<dbReference type="InterPro" id="IPR001387">
    <property type="entry name" value="Cro/C1-type_HTH"/>
</dbReference>
<dbReference type="InterPro" id="IPR010982">
    <property type="entry name" value="Lambda_DNA-bd_dom_sf"/>
</dbReference>
<dbReference type="InterPro" id="IPR023690">
    <property type="entry name" value="RodZ"/>
</dbReference>
<dbReference type="InterPro" id="IPR025194">
    <property type="entry name" value="RodZ-like_C"/>
</dbReference>
<dbReference type="NCBIfam" id="NF008109">
    <property type="entry name" value="PRK10856.1"/>
    <property type="match status" value="1"/>
</dbReference>
<dbReference type="PANTHER" id="PTHR34475">
    <property type="match status" value="1"/>
</dbReference>
<dbReference type="PANTHER" id="PTHR34475:SF1">
    <property type="entry name" value="CYTOSKELETON PROTEIN RODZ"/>
    <property type="match status" value="1"/>
</dbReference>
<dbReference type="Pfam" id="PF13413">
    <property type="entry name" value="HTH_25"/>
    <property type="match status" value="1"/>
</dbReference>
<dbReference type="Pfam" id="PF13464">
    <property type="entry name" value="RodZ_C"/>
    <property type="match status" value="1"/>
</dbReference>
<dbReference type="SMART" id="SM00530">
    <property type="entry name" value="HTH_XRE"/>
    <property type="match status" value="1"/>
</dbReference>
<dbReference type="SUPFAM" id="SSF47413">
    <property type="entry name" value="lambda repressor-like DNA-binding domains"/>
    <property type="match status" value="1"/>
</dbReference>
<dbReference type="PROSITE" id="PS50943">
    <property type="entry name" value="HTH_CROC1"/>
    <property type="match status" value="1"/>
</dbReference>
<proteinExistence type="inferred from homology"/>
<comment type="function">
    <text evidence="1">Cytoskeletal protein that is involved in cell-shape control through regulation of the length of the long axis.</text>
</comment>
<comment type="subcellular location">
    <subcellularLocation>
        <location evidence="1">Cell inner membrane</location>
        <topology evidence="1">Single-pass type II membrane protein</topology>
    </subcellularLocation>
    <text evidence="1">Forms helical filaments along the long axis of the cell.</text>
</comment>
<comment type="domain">
    <text evidence="1">The helix-turn-helix (HTH) motif in the cytoplasmic domain of the N-terminus is involved in the formation of spirals to maintain the rigid rod shape. As this protein is anchored in the cytoplasmic membrane, the HTH motif may contribute to protein-protein interactions to form the RodZ helix, which is localized beneath the cytoplasmic membrane. The C-terminal domain may be critical for determination of the rod shape by probably interacting with enzymes required for synthesis of the peptidoglycan layer, including PBPs in the periplasm.</text>
</comment>
<comment type="similarity">
    <text evidence="1">Belongs to the RodZ family.</text>
</comment>
<protein>
    <recommendedName>
        <fullName evidence="1">Cytoskeleton protein RodZ</fullName>
    </recommendedName>
</protein>
<organism>
    <name type="scientific">Klebsiella pneumoniae (strain 342)</name>
    <dbReference type="NCBI Taxonomy" id="507522"/>
    <lineage>
        <taxon>Bacteria</taxon>
        <taxon>Pseudomonadati</taxon>
        <taxon>Pseudomonadota</taxon>
        <taxon>Gammaproteobacteria</taxon>
        <taxon>Enterobacterales</taxon>
        <taxon>Enterobacteriaceae</taxon>
        <taxon>Klebsiella/Raoultella group</taxon>
        <taxon>Klebsiella</taxon>
        <taxon>Klebsiella pneumoniae complex</taxon>
    </lineage>
</organism>
<gene>
    <name evidence="1" type="primary">rodZ</name>
    <name type="ordered locus">KPK_1274</name>
</gene>
<sequence length="330" mass="35248">MNTEATQDHQEANTTGARLRHAREQLGLSQQAVAERLCLKVSTVRDIEDDKAPADLASTFLRGYIRSYARLVHIPEEELLPMMAKQAPIRAAKVAPMQSFSLGKRRKKRDGWLMSFTWLVLFVVIGLSGAWWWQDHKAQQEEISTMADQSSAELNGGDANSQNVPLDTSAPVDSGTDSAANSAPTDTASTPTTSAPAQTPADNNAVVAPSQANVDTAGTAPTTPATPASPLPTDQANVTTPAASAQDLVMNFSADCWLEVSDATGKKLFSGLQRKGGNLNLSGQAPYKLKIGAPAAVQIQFLGKPVDLSRFIRTNQVARLTLNAEQSPAQ</sequence>
<feature type="chain" id="PRO_0000361845" description="Cytoskeleton protein RodZ">
    <location>
        <begin position="1"/>
        <end position="330"/>
    </location>
</feature>
<feature type="topological domain" description="Cytoplasmic" evidence="1">
    <location>
        <begin position="1"/>
        <end position="111"/>
    </location>
</feature>
<feature type="transmembrane region" description="Helical; Signal-anchor for type II membrane protein" evidence="1">
    <location>
        <begin position="112"/>
        <end position="132"/>
    </location>
</feature>
<feature type="topological domain" description="Periplasmic" evidence="1">
    <location>
        <begin position="133"/>
        <end position="330"/>
    </location>
</feature>
<feature type="domain" description="HTH cro/C1-type" evidence="1">
    <location>
        <begin position="19"/>
        <end position="71"/>
    </location>
</feature>
<feature type="DNA-binding region" description="H-T-H motif" evidence="1">
    <location>
        <begin position="30"/>
        <end position="49"/>
    </location>
</feature>
<feature type="region of interest" description="Disordered" evidence="2">
    <location>
        <begin position="146"/>
        <end position="237"/>
    </location>
</feature>
<feature type="compositionally biased region" description="Polar residues" evidence="2">
    <location>
        <begin position="146"/>
        <end position="166"/>
    </location>
</feature>
<feature type="compositionally biased region" description="Low complexity" evidence="2">
    <location>
        <begin position="176"/>
        <end position="202"/>
    </location>
</feature>
<feature type="compositionally biased region" description="Low complexity" evidence="2">
    <location>
        <begin position="216"/>
        <end position="233"/>
    </location>
</feature>
<name>RODZ_KLEP3</name>
<reference key="1">
    <citation type="journal article" date="2008" name="PLoS Genet.">
        <title>Complete genome sequence of the N2-fixing broad host range endophyte Klebsiella pneumoniae 342 and virulence predictions verified in mice.</title>
        <authorList>
            <person name="Fouts D.E."/>
            <person name="Tyler H.L."/>
            <person name="DeBoy R.T."/>
            <person name="Daugherty S."/>
            <person name="Ren Q."/>
            <person name="Badger J.H."/>
            <person name="Durkin A.S."/>
            <person name="Huot H."/>
            <person name="Shrivastava S."/>
            <person name="Kothari S."/>
            <person name="Dodson R.J."/>
            <person name="Mohamoud Y."/>
            <person name="Khouri H."/>
            <person name="Roesch L.F.W."/>
            <person name="Krogfelt K.A."/>
            <person name="Struve C."/>
            <person name="Triplett E.W."/>
            <person name="Methe B.A."/>
        </authorList>
    </citation>
    <scope>NUCLEOTIDE SEQUENCE [LARGE SCALE GENOMIC DNA]</scope>
    <source>
        <strain>342</strain>
    </source>
</reference>